<organism>
    <name type="scientific">Burkholderia orbicola (strain AU 1054)</name>
    <dbReference type="NCBI Taxonomy" id="331271"/>
    <lineage>
        <taxon>Bacteria</taxon>
        <taxon>Pseudomonadati</taxon>
        <taxon>Pseudomonadota</taxon>
        <taxon>Betaproteobacteria</taxon>
        <taxon>Burkholderiales</taxon>
        <taxon>Burkholderiaceae</taxon>
        <taxon>Burkholderia</taxon>
        <taxon>Burkholderia cepacia complex</taxon>
        <taxon>Burkholderia orbicola</taxon>
    </lineage>
</organism>
<reference key="1">
    <citation type="submission" date="2006-05" db="EMBL/GenBank/DDBJ databases">
        <title>Complete sequence of chromosome 1 of Burkholderia cenocepacia AU 1054.</title>
        <authorList>
            <consortium name="US DOE Joint Genome Institute"/>
            <person name="Copeland A."/>
            <person name="Lucas S."/>
            <person name="Lapidus A."/>
            <person name="Barry K."/>
            <person name="Detter J.C."/>
            <person name="Glavina del Rio T."/>
            <person name="Hammon N."/>
            <person name="Israni S."/>
            <person name="Dalin E."/>
            <person name="Tice H."/>
            <person name="Pitluck S."/>
            <person name="Chain P."/>
            <person name="Malfatti S."/>
            <person name="Shin M."/>
            <person name="Vergez L."/>
            <person name="Schmutz J."/>
            <person name="Larimer F."/>
            <person name="Land M."/>
            <person name="Hauser L."/>
            <person name="Kyrpides N."/>
            <person name="Lykidis A."/>
            <person name="LiPuma J.J."/>
            <person name="Konstantinidis K."/>
            <person name="Tiedje J.M."/>
            <person name="Richardson P."/>
        </authorList>
    </citation>
    <scope>NUCLEOTIDE SEQUENCE [LARGE SCALE GENOMIC DNA]</scope>
    <source>
        <strain>AU 1054</strain>
    </source>
</reference>
<dbReference type="EC" id="2.7.1.130" evidence="1"/>
<dbReference type="EMBL" id="CP000378">
    <property type="protein sequence ID" value="ABF76836.1"/>
    <property type="molecule type" value="Genomic_DNA"/>
</dbReference>
<dbReference type="SMR" id="Q1BU69"/>
<dbReference type="HOGENOM" id="CLU_038816_2_0_4"/>
<dbReference type="UniPathway" id="UPA00359">
    <property type="reaction ID" value="UER00482"/>
</dbReference>
<dbReference type="GO" id="GO:0005886">
    <property type="term" value="C:plasma membrane"/>
    <property type="evidence" value="ECO:0007669"/>
    <property type="project" value="TreeGrafter"/>
</dbReference>
<dbReference type="GO" id="GO:0005524">
    <property type="term" value="F:ATP binding"/>
    <property type="evidence" value="ECO:0007669"/>
    <property type="project" value="UniProtKB-UniRule"/>
</dbReference>
<dbReference type="GO" id="GO:0009029">
    <property type="term" value="F:tetraacyldisaccharide 4'-kinase activity"/>
    <property type="evidence" value="ECO:0007669"/>
    <property type="project" value="UniProtKB-UniRule"/>
</dbReference>
<dbReference type="GO" id="GO:0009245">
    <property type="term" value="P:lipid A biosynthetic process"/>
    <property type="evidence" value="ECO:0007669"/>
    <property type="project" value="UniProtKB-UniRule"/>
</dbReference>
<dbReference type="GO" id="GO:0009244">
    <property type="term" value="P:lipopolysaccharide core region biosynthetic process"/>
    <property type="evidence" value="ECO:0007669"/>
    <property type="project" value="TreeGrafter"/>
</dbReference>
<dbReference type="HAMAP" id="MF_00409">
    <property type="entry name" value="LpxK"/>
    <property type="match status" value="1"/>
</dbReference>
<dbReference type="InterPro" id="IPR003758">
    <property type="entry name" value="LpxK"/>
</dbReference>
<dbReference type="InterPro" id="IPR027417">
    <property type="entry name" value="P-loop_NTPase"/>
</dbReference>
<dbReference type="NCBIfam" id="TIGR00682">
    <property type="entry name" value="lpxK"/>
    <property type="match status" value="1"/>
</dbReference>
<dbReference type="PANTHER" id="PTHR42724">
    <property type="entry name" value="TETRAACYLDISACCHARIDE 4'-KINASE"/>
    <property type="match status" value="1"/>
</dbReference>
<dbReference type="PANTHER" id="PTHR42724:SF1">
    <property type="entry name" value="TETRAACYLDISACCHARIDE 4'-KINASE, MITOCHONDRIAL-RELATED"/>
    <property type="match status" value="1"/>
</dbReference>
<dbReference type="Pfam" id="PF02606">
    <property type="entry name" value="LpxK"/>
    <property type="match status" value="1"/>
</dbReference>
<dbReference type="SUPFAM" id="SSF52540">
    <property type="entry name" value="P-loop containing nucleoside triphosphate hydrolases"/>
    <property type="match status" value="1"/>
</dbReference>
<gene>
    <name evidence="1" type="primary">lpxK</name>
    <name type="ordered locus">Bcen_1933</name>
</gene>
<name>LPXK_BURO1</name>
<proteinExistence type="inferred from homology"/>
<comment type="function">
    <text evidence="1">Transfers the gamma-phosphate of ATP to the 4'-position of a tetraacyldisaccharide 1-phosphate intermediate (termed DS-1-P) to form tetraacyldisaccharide 1,4'-bis-phosphate (lipid IVA).</text>
</comment>
<comment type="catalytic activity">
    <reaction evidence="1">
        <text>a lipid A disaccharide + ATP = a lipid IVA + ADP + H(+)</text>
        <dbReference type="Rhea" id="RHEA:67840"/>
        <dbReference type="ChEBI" id="CHEBI:15378"/>
        <dbReference type="ChEBI" id="CHEBI:30616"/>
        <dbReference type="ChEBI" id="CHEBI:176343"/>
        <dbReference type="ChEBI" id="CHEBI:176425"/>
        <dbReference type="ChEBI" id="CHEBI:456216"/>
        <dbReference type="EC" id="2.7.1.130"/>
    </reaction>
</comment>
<comment type="pathway">
    <text evidence="1">Glycolipid biosynthesis; lipid IV(A) biosynthesis; lipid IV(A) from (3R)-3-hydroxytetradecanoyl-[acyl-carrier-protein] and UDP-N-acetyl-alpha-D-glucosamine: step 6/6.</text>
</comment>
<comment type="similarity">
    <text evidence="1">Belongs to the LpxK family.</text>
</comment>
<sequence>MSAPGGPLARLEARLTREWQRRGALAWALTPFACVFGLCAALRRTAYAQGWKQPVDVGVPVVVVGNVTVGGTGKTPTVIALVDALRAAGFTPGVVSRGYGANVKAPTAVTPASRAAAAGDEPLLIARRTGAPVWVCPDRVAAAQALRAAHPDVDVIVSDDGLQHYRLARTVELVVFDHRLGGNGFLLPAGPLREPLSRHRDATLVNDPYSGALPPWPDTYALALTPGAAWHLDQPALRRPLSQFAHERVLAAAGIGAPERFFATLRAAGLAPATRALPDHYAFADNPFVDDAVDAILITEKDAVKLGASWRDARLWVVPVEAALDPRLIALVVEKLRGRSPA</sequence>
<keyword id="KW-0067">ATP-binding</keyword>
<keyword id="KW-0418">Kinase</keyword>
<keyword id="KW-0441">Lipid A biosynthesis</keyword>
<keyword id="KW-0444">Lipid biosynthesis</keyword>
<keyword id="KW-0443">Lipid metabolism</keyword>
<keyword id="KW-0547">Nucleotide-binding</keyword>
<keyword id="KW-0808">Transferase</keyword>
<protein>
    <recommendedName>
        <fullName evidence="1">Tetraacyldisaccharide 4'-kinase</fullName>
        <ecNumber evidence="1">2.7.1.130</ecNumber>
    </recommendedName>
    <alternativeName>
        <fullName evidence="1">Lipid A 4'-kinase</fullName>
    </alternativeName>
</protein>
<evidence type="ECO:0000255" key="1">
    <source>
        <dbReference type="HAMAP-Rule" id="MF_00409"/>
    </source>
</evidence>
<accession>Q1BU69</accession>
<feature type="chain" id="PRO_0000291197" description="Tetraacyldisaccharide 4'-kinase">
    <location>
        <begin position="1"/>
        <end position="342"/>
    </location>
</feature>
<feature type="binding site" evidence="1">
    <location>
        <begin position="68"/>
        <end position="75"/>
    </location>
    <ligand>
        <name>ATP</name>
        <dbReference type="ChEBI" id="CHEBI:30616"/>
    </ligand>
</feature>